<comment type="function">
    <text>Essential subunit of the protein translocation channel SecYEG. Clamps together the 2 halves of SecY. May contact the channel plug during translocation.</text>
</comment>
<comment type="subunit">
    <text evidence="2">Component of the Sec protein translocase complex. Heterotrimer consisting of alpha (SecY), beta (SecG) and gamma (SecE) subunits. The heterotrimers can form oligomers, although 1 heterotrimer is thought to be able to translocate proteins. Interacts with the ribosome. May interact with SecDF, and other proteins may be involved.</text>
</comment>
<comment type="subcellular location">
    <subcellularLocation>
        <location>Cell membrane</location>
        <topology>Single-pass membrane protein</topology>
    </subcellularLocation>
</comment>
<comment type="similarity">
    <text evidence="1">Belongs to the SecE/SEC61-gamma family.</text>
</comment>
<sequence>MKTDFNQKIEQLKEFIEECRRVWLVLKKPTKDEYLAVAKVTALGISLLGIIGYIIHVPATYIKGILKPPTTPRV</sequence>
<keyword id="KW-0002">3D-structure</keyword>
<keyword id="KW-1003">Cell membrane</keyword>
<keyword id="KW-0472">Membrane</keyword>
<keyword id="KW-0653">Protein transport</keyword>
<keyword id="KW-1185">Reference proteome</keyword>
<keyword id="KW-0811">Translocation</keyword>
<keyword id="KW-0812">Transmembrane</keyword>
<keyword id="KW-1133">Transmembrane helix</keyword>
<keyword id="KW-0813">Transport</keyword>
<proteinExistence type="evidence at protein level"/>
<gene>
    <name evidence="1" type="primary">secE</name>
    <name type="ordered locus">MJ0371</name>
</gene>
<feature type="chain" id="PRO_0000104219" description="Protein translocase subunit SecE">
    <location>
        <begin position="1"/>
        <end position="74"/>
    </location>
</feature>
<feature type="topological domain" description="Cytoplasmic">
    <location>
        <begin position="1"/>
        <end position="36"/>
    </location>
</feature>
<feature type="transmembrane region" description="Helical">
    <location>
        <begin position="37"/>
        <end position="62"/>
    </location>
</feature>
<feature type="topological domain" description="Extracellular">
    <location>
        <begin position="63"/>
        <end position="74"/>
    </location>
</feature>
<feature type="helix" evidence="3">
    <location>
        <begin position="14"/>
        <end position="24"/>
    </location>
</feature>
<feature type="strand" evidence="3">
    <location>
        <begin position="25"/>
        <end position="27"/>
    </location>
</feature>
<feature type="helix" evidence="3">
    <location>
        <begin position="31"/>
        <end position="66"/>
    </location>
</feature>
<evidence type="ECO:0000255" key="1">
    <source>
        <dbReference type="HAMAP-Rule" id="MF_00422"/>
    </source>
</evidence>
<evidence type="ECO:0000269" key="2">
    <source>
    </source>
</evidence>
<evidence type="ECO:0007829" key="3">
    <source>
        <dbReference type="PDB" id="1RH5"/>
    </source>
</evidence>
<dbReference type="EMBL" id="L77117">
    <property type="protein sequence ID" value="AAB98360.1"/>
    <property type="molecule type" value="Genomic_DNA"/>
</dbReference>
<dbReference type="PIR" id="C64346">
    <property type="entry name" value="C64346"/>
</dbReference>
<dbReference type="RefSeq" id="WP_010869870.1">
    <property type="nucleotide sequence ID" value="NC_000909.1"/>
</dbReference>
<dbReference type="PDB" id="1RH5">
    <property type="method" value="X-ray"/>
    <property type="resolution" value="3.20 A"/>
    <property type="chains" value="B=1-74"/>
</dbReference>
<dbReference type="PDB" id="1RHZ">
    <property type="method" value="X-ray"/>
    <property type="resolution" value="3.50 A"/>
    <property type="chains" value="B=1-74"/>
</dbReference>
<dbReference type="PDB" id="2YXQ">
    <property type="method" value="X-ray"/>
    <property type="resolution" value="3.50 A"/>
    <property type="chains" value="B=1-74"/>
</dbReference>
<dbReference type="PDB" id="2YXR">
    <property type="method" value="X-ray"/>
    <property type="resolution" value="3.60 A"/>
    <property type="chains" value="B=1-74"/>
</dbReference>
<dbReference type="PDB" id="3BO0">
    <property type="method" value="EM"/>
    <property type="resolution" value="9.60 A"/>
    <property type="chains" value="B=28-67"/>
</dbReference>
<dbReference type="PDB" id="3BO1">
    <property type="method" value="EM"/>
    <property type="resolution" value="9.60 A"/>
    <property type="chains" value="B=28-67"/>
</dbReference>
<dbReference type="PDB" id="3DKN">
    <property type="method" value="EM"/>
    <property type="resolution" value="8.70 A"/>
    <property type="chains" value="B=3-67"/>
</dbReference>
<dbReference type="PDB" id="4V4N">
    <property type="method" value="EM"/>
    <property type="resolution" value="9.00 A"/>
    <property type="chains" value="A7=1-67"/>
</dbReference>
<dbReference type="PDB" id="4V7I">
    <property type="method" value="EM"/>
    <property type="chains" value="B=28-67"/>
</dbReference>
<dbReference type="PDBsum" id="1RH5"/>
<dbReference type="PDBsum" id="1RHZ"/>
<dbReference type="PDBsum" id="2YXQ"/>
<dbReference type="PDBsum" id="2YXR"/>
<dbReference type="PDBsum" id="3BO0"/>
<dbReference type="PDBsum" id="3BO1"/>
<dbReference type="PDBsum" id="3DKN"/>
<dbReference type="PDBsum" id="4V4N"/>
<dbReference type="PDBsum" id="4V7I"/>
<dbReference type="SMR" id="Q57817"/>
<dbReference type="FunCoup" id="Q57817">
    <property type="interactions" value="28"/>
</dbReference>
<dbReference type="IntAct" id="Q57817">
    <property type="interactions" value="2"/>
</dbReference>
<dbReference type="MINT" id="Q57817"/>
<dbReference type="STRING" id="243232.MJ_0371"/>
<dbReference type="TCDB" id="3.A.5.7.4">
    <property type="family name" value="the general secretory pathway (sec) family"/>
</dbReference>
<dbReference type="PaxDb" id="243232-MJ_0371"/>
<dbReference type="EnsemblBacteria" id="AAB98360">
    <property type="protein sequence ID" value="AAB98360"/>
    <property type="gene ID" value="MJ_0371"/>
</dbReference>
<dbReference type="GeneID" id="1451228"/>
<dbReference type="KEGG" id="mja:MJ_0371"/>
<dbReference type="eggNOG" id="arCOG02204">
    <property type="taxonomic scope" value="Archaea"/>
</dbReference>
<dbReference type="HOGENOM" id="CLU_191921_0_0_2"/>
<dbReference type="InParanoid" id="Q57817"/>
<dbReference type="OrthoDB" id="52835at2157"/>
<dbReference type="EvolutionaryTrace" id="Q57817"/>
<dbReference type="Proteomes" id="UP000000805">
    <property type="component" value="Chromosome"/>
</dbReference>
<dbReference type="GO" id="GO:0005886">
    <property type="term" value="C:plasma membrane"/>
    <property type="evidence" value="ECO:0007669"/>
    <property type="project" value="UniProtKB-SubCell"/>
</dbReference>
<dbReference type="GO" id="GO:0008320">
    <property type="term" value="F:protein transmembrane transporter activity"/>
    <property type="evidence" value="ECO:0007669"/>
    <property type="project" value="UniProtKB-UniRule"/>
</dbReference>
<dbReference type="GO" id="GO:0065002">
    <property type="term" value="P:intracellular protein transmembrane transport"/>
    <property type="evidence" value="ECO:0007669"/>
    <property type="project" value="UniProtKB-UniRule"/>
</dbReference>
<dbReference type="GO" id="GO:0009306">
    <property type="term" value="P:protein secretion"/>
    <property type="evidence" value="ECO:0007669"/>
    <property type="project" value="UniProtKB-UniRule"/>
</dbReference>
<dbReference type="GO" id="GO:0006605">
    <property type="term" value="P:protein targeting"/>
    <property type="evidence" value="ECO:0007669"/>
    <property type="project" value="UniProtKB-UniRule"/>
</dbReference>
<dbReference type="Gene3D" id="1.20.5.820">
    <property type="entry name" value="Preprotein translocase SecE subunit"/>
    <property type="match status" value="1"/>
</dbReference>
<dbReference type="HAMAP" id="MF_00422">
    <property type="entry name" value="SecE"/>
    <property type="match status" value="1"/>
</dbReference>
<dbReference type="InterPro" id="IPR023391">
    <property type="entry name" value="Prot_translocase_SecE_dom_sf"/>
</dbReference>
<dbReference type="InterPro" id="IPR008158">
    <property type="entry name" value="Translocase_Sec61-g"/>
</dbReference>
<dbReference type="InterPro" id="IPR001901">
    <property type="entry name" value="Translocase_SecE/Sec61-g"/>
</dbReference>
<dbReference type="NCBIfam" id="NF006907">
    <property type="entry name" value="PRK09400.1-2"/>
    <property type="match status" value="1"/>
</dbReference>
<dbReference type="NCBIfam" id="TIGR00327">
    <property type="entry name" value="secE_euk_arch"/>
    <property type="match status" value="1"/>
</dbReference>
<dbReference type="Pfam" id="PF00584">
    <property type="entry name" value="SecE"/>
    <property type="match status" value="1"/>
</dbReference>
<dbReference type="SUPFAM" id="SSF103456">
    <property type="entry name" value="Preprotein translocase SecE subunit"/>
    <property type="match status" value="1"/>
</dbReference>
<organism>
    <name type="scientific">Methanocaldococcus jannaschii (strain ATCC 43067 / DSM 2661 / JAL-1 / JCM 10045 / NBRC 100440)</name>
    <name type="common">Methanococcus jannaschii</name>
    <dbReference type="NCBI Taxonomy" id="243232"/>
    <lineage>
        <taxon>Archaea</taxon>
        <taxon>Methanobacteriati</taxon>
        <taxon>Methanobacteriota</taxon>
        <taxon>Methanomada group</taxon>
        <taxon>Methanococci</taxon>
        <taxon>Methanococcales</taxon>
        <taxon>Methanocaldococcaceae</taxon>
        <taxon>Methanocaldococcus</taxon>
    </lineage>
</organism>
<accession>Q57817</accession>
<name>SECE_METJA</name>
<reference key="1">
    <citation type="journal article" date="1996" name="Science">
        <title>Complete genome sequence of the methanogenic archaeon, Methanococcus jannaschii.</title>
        <authorList>
            <person name="Bult C.J."/>
            <person name="White O."/>
            <person name="Olsen G.J."/>
            <person name="Zhou L."/>
            <person name="Fleischmann R.D."/>
            <person name="Sutton G.G."/>
            <person name="Blake J.A."/>
            <person name="FitzGerald L.M."/>
            <person name="Clayton R.A."/>
            <person name="Gocayne J.D."/>
            <person name="Kerlavage A.R."/>
            <person name="Dougherty B.A."/>
            <person name="Tomb J.-F."/>
            <person name="Adams M.D."/>
            <person name="Reich C.I."/>
            <person name="Overbeek R."/>
            <person name="Kirkness E.F."/>
            <person name="Weinstock K.G."/>
            <person name="Merrick J.M."/>
            <person name="Glodek A."/>
            <person name="Scott J.L."/>
            <person name="Geoghagen N.S.M."/>
            <person name="Weidman J.F."/>
            <person name="Fuhrmann J.L."/>
            <person name="Nguyen D."/>
            <person name="Utterback T.R."/>
            <person name="Kelley J.M."/>
            <person name="Peterson J.D."/>
            <person name="Sadow P.W."/>
            <person name="Hanna M.C."/>
            <person name="Cotton M.D."/>
            <person name="Roberts K.M."/>
            <person name="Hurst M.A."/>
            <person name="Kaine B.P."/>
            <person name="Borodovsky M."/>
            <person name="Klenk H.-P."/>
            <person name="Fraser C.M."/>
            <person name="Smith H.O."/>
            <person name="Woese C.R."/>
            <person name="Venter J.C."/>
        </authorList>
    </citation>
    <scope>NUCLEOTIDE SEQUENCE [LARGE SCALE GENOMIC DNA]</scope>
    <source>
        <strain>ATCC 43067 / DSM 2661 / JAL-1 / JCM 10045 / NBRC 100440</strain>
    </source>
</reference>
<reference key="2">
    <citation type="journal article" date="2004" name="Nature">
        <title>X-ray structure of a protein-conducting channel.</title>
        <authorList>
            <person name="Van den Berg B."/>
            <person name="Clemons W.M. Jr."/>
            <person name="Collinson I."/>
            <person name="Modis Y."/>
            <person name="Hartmann E."/>
            <person name="Harrison S.C."/>
            <person name="Rapoport T.A."/>
        </authorList>
    </citation>
    <scope>X-RAY CRYSTALLOGRAPHY (3.2 ANGSTROMS) OF 11-66 IN COMPLEX WITH SECY AND SECG</scope>
</reference>
<reference key="3">
    <citation type="journal article" date="2007" name="Mol. Cell">
        <title>The plug domain of the SecY protein stabilizes the closed state of the translocation channel and maintains a membrane seal.</title>
        <authorList>
            <person name="Li W."/>
            <person name="Schulman S."/>
            <person name="Boyd D."/>
            <person name="Erlandson K."/>
            <person name="Beckwith J."/>
            <person name="Rapoport T.A."/>
        </authorList>
    </citation>
    <scope>X-RAY CRYSTALLOGRAPHY (3.5 ANGSTROMS)</scope>
</reference>
<reference key="4">
    <citation type="journal article" date="2007" name="Mol. Cell">
        <title>Ribosome binding of a single copy of the SecY complex: implications for protein translocation.</title>
        <authorList>
            <person name="Menetret J.F."/>
            <person name="Schaletzky J."/>
            <person name="Clemons W.M. Jr."/>
            <person name="Osborne A.R."/>
            <person name="Skanland S.S."/>
            <person name="Denison C."/>
            <person name="Gygi S.P."/>
            <person name="Kirkpatrick D.S."/>
            <person name="Park E."/>
            <person name="Ludtke S.J."/>
            <person name="Rapoport T.A."/>
            <person name="Akey C.W."/>
        </authorList>
    </citation>
    <scope>STRUCTURE BY ELECTRON MICROSCOPY (9.6 ANGSTROMS) OF 2-433 DOCKED ONTO THE E.COLI RIBOSOME</scope>
</reference>
<reference key="5">
    <citation type="journal article" date="2008" name="Structure">
        <title>Single copies of Sec61 and TRAP associate with a nontranslating mammalian ribosome.</title>
        <authorList>
            <person name="Menetret J.F."/>
            <person name="Hegde R.S."/>
            <person name="Aguiar M."/>
            <person name="Gygi S.P."/>
            <person name="Park E."/>
            <person name="Rapoport T.A."/>
            <person name="Akey C.W."/>
        </authorList>
    </citation>
    <scope>STRUCTURE BY ELECTRON MICROSCOPY (8.7 ANGSTROMS) OF 3-67 DOCKED ONTO DOG RIBOSOMES</scope>
</reference>
<reference key="6">
    <citation type="journal article" date="2009" name="Structure">
        <title>Regulation of the protein-conducting channel by a bound ribosome.</title>
        <authorList>
            <person name="Gumbart J."/>
            <person name="Trabuco L.G."/>
            <person name="Schreiner E."/>
            <person name="Villa E."/>
            <person name="Schulten K."/>
        </authorList>
    </citation>
    <scope>STRUCTURE BY ELECTRON MICROSCOPY OF 28-67 DOCKED ONTO E.COLI RIBOSOMES</scope>
</reference>
<protein>
    <recommendedName>
        <fullName evidence="1">Protein translocase subunit SecE</fullName>
    </recommendedName>
    <alternativeName>
        <fullName evidence="1">Protein transport protein Sec61 gamma subunit homolog</fullName>
    </alternativeName>
</protein>